<gene>
    <name type="primary">57</name>
</gene>
<organism>
    <name type="scientific">Alcelaphine herpesvirus 1 (strain C500)</name>
    <name type="common">AlHV-1</name>
    <name type="synonym">Malignant catarrhal fever virus</name>
    <dbReference type="NCBI Taxonomy" id="654901"/>
    <lineage>
        <taxon>Viruses</taxon>
        <taxon>Duplodnaviria</taxon>
        <taxon>Heunggongvirae</taxon>
        <taxon>Peploviricota</taxon>
        <taxon>Herviviricetes</taxon>
        <taxon>Herpesvirales</taxon>
        <taxon>Orthoherpesviridae</taxon>
        <taxon>Gammaherpesvirinae</taxon>
        <taxon>Macavirus</taxon>
        <taxon>Macavirus alcelaphinegamma1</taxon>
    </lineage>
</organism>
<reference key="1">
    <citation type="journal article" date="1997" name="J. Virol.">
        <title>Primary structure of the alcelaphine herpesvirus 1 genome.</title>
        <authorList>
            <person name="Ensser A."/>
            <person name="Pflanz R."/>
            <person name="Fleckenstein B."/>
        </authorList>
    </citation>
    <scope>NUCLEOTIDE SEQUENCE [LARGE SCALE GENOMIC DNA]</scope>
</reference>
<reference key="2">
    <citation type="journal article" date="2009" name="Vet. Res. Commun.">
        <title>Alcelaphine herpesvirus-1 open reading frame 57 encodes an immediate-early protein with regulatory function.</title>
        <authorList>
            <person name="Leenadevi T."/>
            <person name="Dalziel R.G."/>
        </authorList>
    </citation>
    <scope>FUNCTION</scope>
</reference>
<reference key="3">
    <citation type="journal article" date="2009" name="Vet. Res. Commun.">
        <title>The alcelaphine herpesvirus-1 ORF 57 encodes a nuclear shuttling protein.</title>
        <authorList>
            <person name="Leenadevi T."/>
            <person name="Dalziel R.G."/>
        </authorList>
    </citation>
    <scope>SUBCELLULAR LOCATION</scope>
</reference>
<accession>O36407</accession>
<sequence>MAQQAIVTMSALRRTMEVSDSGDVSIDISAEDSNDSFHLEESVDDCMDDCKPNNRPNPISMKPAKRRVFMVPKRERSKTPVQHTSPLNRLYPNVVLGKQHGYKQRPAPSARSRRPQPYSARKDSAAKPQSTPSNQNPLTELLKNVDPAIASRITEMRIPRSMLRTPSGQPFAHWLMPSAEDSSKFINVNPVNMEVEEHVNVVVRRCTEWALISSRLQDKSISTKYLAENFYDLRDFAQRSINKSAWINLRREAIANAGFVNLCAFADEMMMWLQLNLNNQGSWKACREDIILTGAPDMCFHALQKVRAFIKCFLRERHQRALVNALCHIICFEGGIKQAATLCQELFFDFKVGLMVLYFLTPYAFLYSHTIPQCNFGGYFSKCVAQYTPGAVTGLLNSAIEDHYKDCTSQDCTNLITAIVSPETSNKGLLFFPLPM</sequence>
<evidence type="ECO:0000256" key="1">
    <source>
        <dbReference type="SAM" id="MobiDB-lite"/>
    </source>
</evidence>
<evidence type="ECO:0000269" key="2">
    <source>
    </source>
</evidence>
<evidence type="ECO:0000269" key="3">
    <source>
    </source>
</evidence>
<evidence type="ECO:0000305" key="4"/>
<feature type="chain" id="PRO_0000405758" description="Immediate-early phosphoprotein 57">
    <location>
        <begin position="1"/>
        <end position="436"/>
    </location>
</feature>
<feature type="region of interest" description="Disordered" evidence="1">
    <location>
        <begin position="71"/>
        <end position="140"/>
    </location>
</feature>
<feature type="compositionally biased region" description="Low complexity" evidence="1">
    <location>
        <begin position="104"/>
        <end position="119"/>
    </location>
</feature>
<feature type="compositionally biased region" description="Polar residues" evidence="1">
    <location>
        <begin position="127"/>
        <end position="138"/>
    </location>
</feature>
<name>IE63_ALHV1</name>
<organismHost>
    <name type="scientific">Connochaetes taurinus</name>
    <name type="common">Blue wildebeest</name>
    <dbReference type="NCBI Taxonomy" id="9927"/>
</organismHost>
<protein>
    <recommendedName>
        <fullName>Immediate-early phosphoprotein 57</fullName>
    </recommendedName>
</protein>
<dbReference type="EMBL" id="AF005370">
    <property type="protein sequence ID" value="AAC58104.1"/>
    <property type="molecule type" value="Genomic_DNA"/>
</dbReference>
<dbReference type="PIR" id="T03152">
    <property type="entry name" value="T03152"/>
</dbReference>
<dbReference type="RefSeq" id="NP_065556.1">
    <property type="nucleotide sequence ID" value="NC_002531.1"/>
</dbReference>
<dbReference type="SMR" id="O36407"/>
<dbReference type="KEGG" id="vg:911781"/>
<dbReference type="Proteomes" id="UP000000941">
    <property type="component" value="Segment"/>
</dbReference>
<dbReference type="GO" id="GO:0030430">
    <property type="term" value="C:host cell cytoplasm"/>
    <property type="evidence" value="ECO:0007669"/>
    <property type="project" value="UniProtKB-SubCell"/>
</dbReference>
<dbReference type="GO" id="GO:0042025">
    <property type="term" value="C:host cell nucleus"/>
    <property type="evidence" value="ECO:0007669"/>
    <property type="project" value="UniProtKB-SubCell"/>
</dbReference>
<dbReference type="GO" id="GO:0006355">
    <property type="term" value="P:regulation of DNA-templated transcription"/>
    <property type="evidence" value="ECO:0007669"/>
    <property type="project" value="InterPro"/>
</dbReference>
<dbReference type="InterPro" id="IPR008648">
    <property type="entry name" value="ICP27-like"/>
</dbReference>
<dbReference type="Pfam" id="PF05459">
    <property type="entry name" value="Herpes_UL69"/>
    <property type="match status" value="1"/>
</dbReference>
<proteinExistence type="inferred from homology"/>
<comment type="function">
    <text evidence="3">Acts at a post-transcriptional level to regulate viral gene expression.</text>
</comment>
<comment type="subcellular location">
    <subcellularLocation>
        <location evidence="2">Host nucleus</location>
    </subcellularLocation>
    <subcellularLocation>
        <location evidence="2">Host cytoplasm</location>
    </subcellularLocation>
    <text>Shuttles between the host nucleus and cytoplasm.</text>
</comment>
<comment type="similarity">
    <text evidence="4">Belongs to the herpesviridae UL69 family.</text>
</comment>
<keyword id="KW-0244">Early protein</keyword>
<keyword id="KW-1035">Host cytoplasm</keyword>
<keyword id="KW-1048">Host nucleus</keyword>
<keyword id="KW-0597">Phosphoprotein</keyword>
<keyword id="KW-1185">Reference proteome</keyword>
<keyword id="KW-0804">Transcription</keyword>
<keyword id="KW-0805">Transcription regulation</keyword>